<keyword id="KW-0997">Cell inner membrane</keyword>
<keyword id="KW-1003">Cell membrane</keyword>
<keyword id="KW-0472">Membrane</keyword>
<keyword id="KW-0520">NAD</keyword>
<keyword id="KW-0874">Quinone</keyword>
<keyword id="KW-1185">Reference proteome</keyword>
<keyword id="KW-1278">Translocase</keyword>
<keyword id="KW-0812">Transmembrane</keyword>
<keyword id="KW-1133">Transmembrane helix</keyword>
<keyword id="KW-0813">Transport</keyword>
<keyword id="KW-0830">Ubiquinone</keyword>
<feature type="chain" id="PRO_0000391209" description="NADH-quinone oxidoreductase subunit N">
    <location>
        <begin position="1"/>
        <end position="492"/>
    </location>
</feature>
<feature type="transmembrane region" description="Helical" evidence="1">
    <location>
        <begin position="12"/>
        <end position="32"/>
    </location>
</feature>
<feature type="transmembrane region" description="Helical" evidence="1">
    <location>
        <begin position="44"/>
        <end position="64"/>
    </location>
</feature>
<feature type="transmembrane region" description="Helical" evidence="1">
    <location>
        <begin position="76"/>
        <end position="96"/>
    </location>
</feature>
<feature type="transmembrane region" description="Helical" evidence="1">
    <location>
        <begin position="115"/>
        <end position="135"/>
    </location>
</feature>
<feature type="transmembrane region" description="Helical" evidence="1">
    <location>
        <begin position="138"/>
        <end position="158"/>
    </location>
</feature>
<feature type="transmembrane region" description="Helical" evidence="1">
    <location>
        <begin position="169"/>
        <end position="189"/>
    </location>
</feature>
<feature type="transmembrane region" description="Helical" evidence="1">
    <location>
        <begin position="212"/>
        <end position="232"/>
    </location>
</feature>
<feature type="transmembrane region" description="Helical" evidence="1">
    <location>
        <begin position="244"/>
        <end position="264"/>
    </location>
</feature>
<feature type="transmembrane region" description="Helical" evidence="1">
    <location>
        <begin position="272"/>
        <end position="292"/>
    </location>
</feature>
<feature type="transmembrane region" description="Helical" evidence="1">
    <location>
        <begin position="306"/>
        <end position="326"/>
    </location>
</feature>
<feature type="transmembrane region" description="Helical" evidence="1">
    <location>
        <begin position="334"/>
        <end position="354"/>
    </location>
</feature>
<feature type="transmembrane region" description="Helical" evidence="1">
    <location>
        <begin position="381"/>
        <end position="401"/>
    </location>
</feature>
<feature type="transmembrane region" description="Helical" evidence="1">
    <location>
        <begin position="416"/>
        <end position="438"/>
    </location>
</feature>
<feature type="transmembrane region" description="Helical" evidence="1">
    <location>
        <begin position="463"/>
        <end position="483"/>
    </location>
</feature>
<reference key="1">
    <citation type="journal article" date="2010" name="Appl. Environ. Microbiol.">
        <title>The genome sequence of Psychrobacter arcticus 273-4, a psychroactive Siberian permafrost bacterium, reveals mechanisms for adaptation to low-temperature growth.</title>
        <authorList>
            <person name="Ayala-del-Rio H.L."/>
            <person name="Chain P.S."/>
            <person name="Grzymski J.J."/>
            <person name="Ponder M.A."/>
            <person name="Ivanova N."/>
            <person name="Bergholz P.W."/>
            <person name="Di Bartolo G."/>
            <person name="Hauser L."/>
            <person name="Land M."/>
            <person name="Bakermans C."/>
            <person name="Rodrigues D."/>
            <person name="Klappenbach J."/>
            <person name="Zarka D."/>
            <person name="Larimer F."/>
            <person name="Richardson P."/>
            <person name="Murray A."/>
            <person name="Thomashow M."/>
            <person name="Tiedje J.M."/>
        </authorList>
    </citation>
    <scope>NUCLEOTIDE SEQUENCE [LARGE SCALE GENOMIC DNA]</scope>
    <source>
        <strain>DSM 17307 / VKM B-2377 / 273-4</strain>
    </source>
</reference>
<gene>
    <name evidence="1" type="primary">nuoN</name>
    <name type="ordered locus">Psyc_0596</name>
</gene>
<organism>
    <name type="scientific">Psychrobacter arcticus (strain DSM 17307 / VKM B-2377 / 273-4)</name>
    <dbReference type="NCBI Taxonomy" id="259536"/>
    <lineage>
        <taxon>Bacteria</taxon>
        <taxon>Pseudomonadati</taxon>
        <taxon>Pseudomonadota</taxon>
        <taxon>Gammaproteobacteria</taxon>
        <taxon>Moraxellales</taxon>
        <taxon>Moraxellaceae</taxon>
        <taxon>Psychrobacter</taxon>
    </lineage>
</organism>
<accession>Q4FU52</accession>
<name>NUON_PSYA2</name>
<protein>
    <recommendedName>
        <fullName evidence="1">NADH-quinone oxidoreductase subunit N</fullName>
        <ecNumber evidence="1">7.1.1.-</ecNumber>
    </recommendedName>
    <alternativeName>
        <fullName evidence="1">NADH dehydrogenase I subunit N</fullName>
    </alternativeName>
    <alternativeName>
        <fullName evidence="1">NDH-1 subunit N</fullName>
    </alternativeName>
</protein>
<sequence length="492" mass="53521">MNDFTMNDLMGLLPYAPIIAVVITVLVVMIAITMKRSHMVTGTISVVGLNIGLFILLGQMAGIIDSGSLVPAAEQLFVIDNFAQFNMVIIFICALACCTLSYAYLADLKDHKEELYLLMLLSTVGALLMVCAQHLASFFMSLEMLSIPLYGMLSYTYMRTRSLESGLKYLVLSATASATLLMGMAFIYAEVGSLAFKPISLTLADTFESPLLILGAAMMMFGIAFKLSAAPFHIWTPDVYEGAPAPIATYLASVSKVAMMALAVRFLIDTSLLALPSVQMLLMVMATLSILLGNLLAVRQTSLKRLLGYSSIAHMGYVLIVIVSIGSAADSISSMYMAIYAFTSIGAFGVVTLMSSPYRLSGEADELTHYQGLFWRRPVLTAVMTIMMLSLAGIPLTAGFITKLFAILAAVQGTNWFLAAMIILGSAIGLFYYLRVLLTLFKRPKQFIEFDVSKQWGLRTGGIMVIAVTAIIVFFGVLPNSMIEWASLARIW</sequence>
<proteinExistence type="inferred from homology"/>
<comment type="function">
    <text evidence="1">NDH-1 shuttles electrons from NADH, via FMN and iron-sulfur (Fe-S) centers, to quinones in the respiratory chain. The immediate electron acceptor for the enzyme in this species is believed to be ubiquinone. Couples the redox reaction to proton translocation (for every two electrons transferred, four hydrogen ions are translocated across the cytoplasmic membrane), and thus conserves the redox energy in a proton gradient.</text>
</comment>
<comment type="catalytic activity">
    <reaction evidence="1">
        <text>a quinone + NADH + 5 H(+)(in) = a quinol + NAD(+) + 4 H(+)(out)</text>
        <dbReference type="Rhea" id="RHEA:57888"/>
        <dbReference type="ChEBI" id="CHEBI:15378"/>
        <dbReference type="ChEBI" id="CHEBI:24646"/>
        <dbReference type="ChEBI" id="CHEBI:57540"/>
        <dbReference type="ChEBI" id="CHEBI:57945"/>
        <dbReference type="ChEBI" id="CHEBI:132124"/>
    </reaction>
</comment>
<comment type="subunit">
    <text evidence="1">NDH-1 is composed of 14 different subunits. Subunits NuoA, H, J, K, L, M, N constitute the membrane sector of the complex.</text>
</comment>
<comment type="subcellular location">
    <subcellularLocation>
        <location evidence="1">Cell inner membrane</location>
        <topology evidence="1">Multi-pass membrane protein</topology>
    </subcellularLocation>
</comment>
<comment type="similarity">
    <text evidence="1">Belongs to the complex I subunit 2 family.</text>
</comment>
<evidence type="ECO:0000255" key="1">
    <source>
        <dbReference type="HAMAP-Rule" id="MF_00445"/>
    </source>
</evidence>
<dbReference type="EC" id="7.1.1.-" evidence="1"/>
<dbReference type="EMBL" id="CP000082">
    <property type="protein sequence ID" value="AAZ18456.1"/>
    <property type="molecule type" value="Genomic_DNA"/>
</dbReference>
<dbReference type="RefSeq" id="WP_011279885.1">
    <property type="nucleotide sequence ID" value="NC_007204.1"/>
</dbReference>
<dbReference type="SMR" id="Q4FU52"/>
<dbReference type="STRING" id="259536.Psyc_0596"/>
<dbReference type="KEGG" id="par:Psyc_0596"/>
<dbReference type="eggNOG" id="COG1007">
    <property type="taxonomic scope" value="Bacteria"/>
</dbReference>
<dbReference type="HOGENOM" id="CLU_007100_1_5_6"/>
<dbReference type="OrthoDB" id="9768329at2"/>
<dbReference type="Proteomes" id="UP000000546">
    <property type="component" value="Chromosome"/>
</dbReference>
<dbReference type="GO" id="GO:0005886">
    <property type="term" value="C:plasma membrane"/>
    <property type="evidence" value="ECO:0007669"/>
    <property type="project" value="UniProtKB-SubCell"/>
</dbReference>
<dbReference type="GO" id="GO:0008137">
    <property type="term" value="F:NADH dehydrogenase (ubiquinone) activity"/>
    <property type="evidence" value="ECO:0007669"/>
    <property type="project" value="InterPro"/>
</dbReference>
<dbReference type="GO" id="GO:0050136">
    <property type="term" value="F:NADH:ubiquinone reductase (non-electrogenic) activity"/>
    <property type="evidence" value="ECO:0007669"/>
    <property type="project" value="UniProtKB-UniRule"/>
</dbReference>
<dbReference type="GO" id="GO:0048038">
    <property type="term" value="F:quinone binding"/>
    <property type="evidence" value="ECO:0007669"/>
    <property type="project" value="UniProtKB-KW"/>
</dbReference>
<dbReference type="GO" id="GO:0042773">
    <property type="term" value="P:ATP synthesis coupled electron transport"/>
    <property type="evidence" value="ECO:0007669"/>
    <property type="project" value="InterPro"/>
</dbReference>
<dbReference type="HAMAP" id="MF_00445">
    <property type="entry name" value="NDH1_NuoN_1"/>
    <property type="match status" value="1"/>
</dbReference>
<dbReference type="InterPro" id="IPR010096">
    <property type="entry name" value="NADH-Q_OxRdtase_suN/2"/>
</dbReference>
<dbReference type="InterPro" id="IPR001750">
    <property type="entry name" value="ND/Mrp_TM"/>
</dbReference>
<dbReference type="NCBIfam" id="TIGR01770">
    <property type="entry name" value="NDH_I_N"/>
    <property type="match status" value="1"/>
</dbReference>
<dbReference type="PANTHER" id="PTHR22773">
    <property type="entry name" value="NADH DEHYDROGENASE"/>
    <property type="match status" value="1"/>
</dbReference>
<dbReference type="Pfam" id="PF00361">
    <property type="entry name" value="Proton_antipo_M"/>
    <property type="match status" value="1"/>
</dbReference>